<comment type="function">
    <text evidence="1">Regulates endothelial chemotaxis and tube formation. Has a role in angiogenesis and apoptosis via modulation of the actin cytoskeleton and facilitation of proteasomal degradation of the apoptosis inhibitors BIRC3/IAP1 and BIRC2/IAP2 (By similarity).</text>
</comment>
<comment type="subunit">
    <text evidence="1">Interacts with FLNA. Interacts with the 20S proteasome subunit PSMA7.</text>
</comment>
<comment type="subcellular location">
    <subcellularLocation>
        <location evidence="1">Cell membrane</location>
        <topology evidence="6">Single-pass type I membrane protein</topology>
    </subcellularLocation>
    <subcellularLocation>
        <location evidence="1">Cytoplasm</location>
    </subcellularLocation>
</comment>
<comment type="alternative products">
    <event type="alternative splicing"/>
    <isoform>
        <id>P0C8R9-1</id>
        <name>1</name>
        <sequence type="displayed"/>
    </isoform>
    <isoform>
        <id>P0C8R9-2</id>
        <name>2</name>
        <sequence type="described" ref="VSP_036453"/>
    </isoform>
</comment>
<comment type="PTM">
    <text evidence="1">May be heavily O-glycosylated.</text>
</comment>
<comment type="similarity">
    <text evidence="6">Belongs to the ECSCR family.</text>
</comment>
<gene>
    <name type="primary">ECSCR</name>
    <name type="synonym">ECSM2</name>
</gene>
<feature type="signal peptide" evidence="3">
    <location>
        <begin position="1"/>
        <end position="24"/>
    </location>
</feature>
<feature type="chain" id="PRO_0000365016" description="Endothelial cell-specific chemotaxis regulator">
    <location>
        <begin position="25"/>
        <end position="175"/>
    </location>
</feature>
<feature type="topological domain" description="Extracellular" evidence="3">
    <location>
        <begin position="25"/>
        <end position="91"/>
    </location>
</feature>
<feature type="transmembrane region" description="Helical" evidence="3">
    <location>
        <begin position="92"/>
        <end position="112"/>
    </location>
</feature>
<feature type="topological domain" description="Cytoplasmic" evidence="3">
    <location>
        <begin position="113"/>
        <end position="175"/>
    </location>
</feature>
<feature type="region of interest" description="Disordered" evidence="4">
    <location>
        <begin position="33"/>
        <end position="66"/>
    </location>
</feature>
<feature type="region of interest" description="Disordered" evidence="4">
    <location>
        <begin position="124"/>
        <end position="145"/>
    </location>
</feature>
<feature type="compositionally biased region" description="Low complexity" evidence="4">
    <location>
        <begin position="34"/>
        <end position="60"/>
    </location>
</feature>
<feature type="compositionally biased region" description="Polar residues" evidence="4">
    <location>
        <begin position="133"/>
        <end position="145"/>
    </location>
</feature>
<feature type="modified residue" description="Phosphoserine" evidence="2">
    <location>
        <position position="165"/>
    </location>
</feature>
<feature type="splice variant" id="VSP_036453" description="In isoform 2." evidence="5">
    <location>
        <begin position="58"/>
        <end position="95"/>
    </location>
</feature>
<feature type="sequence conflict" description="In Ref. 3; CX001226." evidence="6" ref="3">
    <original>S</original>
    <variation>F</variation>
    <location>
        <position position="139"/>
    </location>
</feature>
<feature type="sequence conflict" description="In Ref. 1; DN443643 and 3; CX001226." evidence="6" ref="1 3">
    <original>I</original>
    <variation>L</variation>
    <location>
        <position position="175"/>
    </location>
</feature>
<organism>
    <name type="scientific">Canis lupus familiaris</name>
    <name type="common">Dog</name>
    <name type="synonym">Canis familiaris</name>
    <dbReference type="NCBI Taxonomy" id="9615"/>
    <lineage>
        <taxon>Eukaryota</taxon>
        <taxon>Metazoa</taxon>
        <taxon>Chordata</taxon>
        <taxon>Craniata</taxon>
        <taxon>Vertebrata</taxon>
        <taxon>Euteleostomi</taxon>
        <taxon>Mammalia</taxon>
        <taxon>Eutheria</taxon>
        <taxon>Laurasiatheria</taxon>
        <taxon>Carnivora</taxon>
        <taxon>Caniformia</taxon>
        <taxon>Canidae</taxon>
        <taxon>Canis</taxon>
    </lineage>
</organism>
<name>ECSCR_CANLF</name>
<accession>P0C8R9</accession>
<reference key="1">
    <citation type="submission" date="2005-03" db="EMBL/GenBank/DDBJ databases">
        <authorList>
            <person name="Staten N.R."/>
        </authorList>
    </citation>
    <scope>NUCLEOTIDE SEQUENCE [LARGE SCALE MRNA] (ISOFORM 2)</scope>
</reference>
<reference key="2">
    <citation type="journal article" date="2005" name="Nature">
        <title>Genome sequence, comparative analysis and haplotype structure of the domestic dog.</title>
        <authorList>
            <person name="Lindblad-Toh K."/>
            <person name="Wade C.M."/>
            <person name="Mikkelsen T.S."/>
            <person name="Karlsson E.K."/>
            <person name="Jaffe D.B."/>
            <person name="Kamal M."/>
            <person name="Clamp M."/>
            <person name="Chang J.L."/>
            <person name="Kulbokas E.J. III"/>
            <person name="Zody M.C."/>
            <person name="Mauceli E."/>
            <person name="Xie X."/>
            <person name="Breen M."/>
            <person name="Wayne R.K."/>
            <person name="Ostrander E.A."/>
            <person name="Ponting C.P."/>
            <person name="Galibert F."/>
            <person name="Smith D.R."/>
            <person name="deJong P.J."/>
            <person name="Kirkness E.F."/>
            <person name="Alvarez P."/>
            <person name="Biagi T."/>
            <person name="Brockman W."/>
            <person name="Butler J."/>
            <person name="Chin C.-W."/>
            <person name="Cook A."/>
            <person name="Cuff J."/>
            <person name="Daly M.J."/>
            <person name="DeCaprio D."/>
            <person name="Gnerre S."/>
            <person name="Grabherr M."/>
            <person name="Kellis M."/>
            <person name="Kleber M."/>
            <person name="Bardeleben C."/>
            <person name="Goodstadt L."/>
            <person name="Heger A."/>
            <person name="Hitte C."/>
            <person name="Kim L."/>
            <person name="Koepfli K.-P."/>
            <person name="Parker H.G."/>
            <person name="Pollinger J.P."/>
            <person name="Searle S.M.J."/>
            <person name="Sutter N.B."/>
            <person name="Thomas R."/>
            <person name="Webber C."/>
            <person name="Baldwin J."/>
            <person name="Abebe A."/>
            <person name="Abouelleil A."/>
            <person name="Aftuck L."/>
            <person name="Ait-Zahra M."/>
            <person name="Aldredge T."/>
            <person name="Allen N."/>
            <person name="An P."/>
            <person name="Anderson S."/>
            <person name="Antoine C."/>
            <person name="Arachchi H."/>
            <person name="Aslam A."/>
            <person name="Ayotte L."/>
            <person name="Bachantsang P."/>
            <person name="Barry A."/>
            <person name="Bayul T."/>
            <person name="Benamara M."/>
            <person name="Berlin A."/>
            <person name="Bessette D."/>
            <person name="Blitshteyn B."/>
            <person name="Bloom T."/>
            <person name="Blye J."/>
            <person name="Boguslavskiy L."/>
            <person name="Bonnet C."/>
            <person name="Boukhgalter B."/>
            <person name="Brown A."/>
            <person name="Cahill P."/>
            <person name="Calixte N."/>
            <person name="Camarata J."/>
            <person name="Cheshatsang Y."/>
            <person name="Chu J."/>
            <person name="Citroen M."/>
            <person name="Collymore A."/>
            <person name="Cooke P."/>
            <person name="Dawoe T."/>
            <person name="Daza R."/>
            <person name="Decktor K."/>
            <person name="DeGray S."/>
            <person name="Dhargay N."/>
            <person name="Dooley K."/>
            <person name="Dooley K."/>
            <person name="Dorje P."/>
            <person name="Dorjee K."/>
            <person name="Dorris L."/>
            <person name="Duffey N."/>
            <person name="Dupes A."/>
            <person name="Egbiremolen O."/>
            <person name="Elong R."/>
            <person name="Falk J."/>
            <person name="Farina A."/>
            <person name="Faro S."/>
            <person name="Ferguson D."/>
            <person name="Ferreira P."/>
            <person name="Fisher S."/>
            <person name="FitzGerald M."/>
            <person name="Foley K."/>
            <person name="Foley C."/>
            <person name="Franke A."/>
            <person name="Friedrich D."/>
            <person name="Gage D."/>
            <person name="Garber M."/>
            <person name="Gearin G."/>
            <person name="Giannoukos G."/>
            <person name="Goode T."/>
            <person name="Goyette A."/>
            <person name="Graham J."/>
            <person name="Grandbois E."/>
            <person name="Gyaltsen K."/>
            <person name="Hafez N."/>
            <person name="Hagopian D."/>
            <person name="Hagos B."/>
            <person name="Hall J."/>
            <person name="Healy C."/>
            <person name="Hegarty R."/>
            <person name="Honan T."/>
            <person name="Horn A."/>
            <person name="Houde N."/>
            <person name="Hughes L."/>
            <person name="Hunnicutt L."/>
            <person name="Husby M."/>
            <person name="Jester B."/>
            <person name="Jones C."/>
            <person name="Kamat A."/>
            <person name="Kanga B."/>
            <person name="Kells C."/>
            <person name="Khazanovich D."/>
            <person name="Kieu A.C."/>
            <person name="Kisner P."/>
            <person name="Kumar M."/>
            <person name="Lance K."/>
            <person name="Landers T."/>
            <person name="Lara M."/>
            <person name="Lee W."/>
            <person name="Leger J.-P."/>
            <person name="Lennon N."/>
            <person name="Leuper L."/>
            <person name="LeVine S."/>
            <person name="Liu J."/>
            <person name="Liu X."/>
            <person name="Lokyitsang Y."/>
            <person name="Lokyitsang T."/>
            <person name="Lui A."/>
            <person name="Macdonald J."/>
            <person name="Major J."/>
            <person name="Marabella R."/>
            <person name="Maru K."/>
            <person name="Matthews C."/>
            <person name="McDonough S."/>
            <person name="Mehta T."/>
            <person name="Meldrim J."/>
            <person name="Melnikov A."/>
            <person name="Meneus L."/>
            <person name="Mihalev A."/>
            <person name="Mihova T."/>
            <person name="Miller K."/>
            <person name="Mittelman R."/>
            <person name="Mlenga V."/>
            <person name="Mulrain L."/>
            <person name="Munson G."/>
            <person name="Navidi A."/>
            <person name="Naylor J."/>
            <person name="Nguyen T."/>
            <person name="Nguyen N."/>
            <person name="Nguyen C."/>
            <person name="Nguyen T."/>
            <person name="Nicol R."/>
            <person name="Norbu N."/>
            <person name="Norbu C."/>
            <person name="Novod N."/>
            <person name="Nyima T."/>
            <person name="Olandt P."/>
            <person name="O'Neill B."/>
            <person name="O'Neill K."/>
            <person name="Osman S."/>
            <person name="Oyono L."/>
            <person name="Patti C."/>
            <person name="Perrin D."/>
            <person name="Phunkhang P."/>
            <person name="Pierre F."/>
            <person name="Priest M."/>
            <person name="Rachupka A."/>
            <person name="Raghuraman S."/>
            <person name="Rameau R."/>
            <person name="Ray V."/>
            <person name="Raymond C."/>
            <person name="Rege F."/>
            <person name="Rise C."/>
            <person name="Rogers J."/>
            <person name="Rogov P."/>
            <person name="Sahalie J."/>
            <person name="Settipalli S."/>
            <person name="Sharpe T."/>
            <person name="Shea T."/>
            <person name="Sheehan M."/>
            <person name="Sherpa N."/>
            <person name="Shi J."/>
            <person name="Shih D."/>
            <person name="Sloan J."/>
            <person name="Smith C."/>
            <person name="Sparrow T."/>
            <person name="Stalker J."/>
            <person name="Stange-Thomann N."/>
            <person name="Stavropoulos S."/>
            <person name="Stone C."/>
            <person name="Stone S."/>
            <person name="Sykes S."/>
            <person name="Tchuinga P."/>
            <person name="Tenzing P."/>
            <person name="Tesfaye S."/>
            <person name="Thoulutsang D."/>
            <person name="Thoulutsang Y."/>
            <person name="Topham K."/>
            <person name="Topping I."/>
            <person name="Tsamla T."/>
            <person name="Vassiliev H."/>
            <person name="Venkataraman V."/>
            <person name="Vo A."/>
            <person name="Wangchuk T."/>
            <person name="Wangdi T."/>
            <person name="Weiand M."/>
            <person name="Wilkinson J."/>
            <person name="Wilson A."/>
            <person name="Yadav S."/>
            <person name="Yang S."/>
            <person name="Yang X."/>
            <person name="Young G."/>
            <person name="Yu Q."/>
            <person name="Zainoun J."/>
            <person name="Zembek L."/>
            <person name="Zimmer A."/>
            <person name="Lander E.S."/>
        </authorList>
    </citation>
    <scope>NUCLEOTIDE SEQUENCE [LARGE SCALE GENOMIC DNA]</scope>
    <source>
        <strain>Boxer</strain>
    </source>
</reference>
<reference key="3">
    <citation type="submission" date="2004-12" db="EMBL/GenBank/DDBJ databases">
        <title>ESTs from Canis familiaris left cardiac ventricle (dog).</title>
        <authorList>
            <person name="Balija V.S."/>
            <person name="Nascimento L.U."/>
            <person name="McCombie W.R."/>
        </authorList>
    </citation>
    <scope>NUCLEOTIDE SEQUENCE [LARGE SCALE MRNA] OF 49-175 (ISOFORM 1)</scope>
    <source>
        <tissue>Heart ventricle</tissue>
    </source>
</reference>
<keyword id="KW-0025">Alternative splicing</keyword>
<keyword id="KW-0037">Angiogenesis</keyword>
<keyword id="KW-0053">Apoptosis</keyword>
<keyword id="KW-1003">Cell membrane</keyword>
<keyword id="KW-0145">Chemotaxis</keyword>
<keyword id="KW-0963">Cytoplasm</keyword>
<keyword id="KW-0217">Developmental protein</keyword>
<keyword id="KW-0221">Differentiation</keyword>
<keyword id="KW-0325">Glycoprotein</keyword>
<keyword id="KW-0472">Membrane</keyword>
<keyword id="KW-0597">Phosphoprotein</keyword>
<keyword id="KW-1185">Reference proteome</keyword>
<keyword id="KW-0732">Signal</keyword>
<keyword id="KW-0812">Transmembrane</keyword>
<keyword id="KW-1133">Transmembrane helix</keyword>
<dbReference type="EMBL" id="DN443643">
    <property type="status" value="NOT_ANNOTATED_CDS"/>
    <property type="molecule type" value="mRNA"/>
</dbReference>
<dbReference type="EMBL" id="AAEX02023193">
    <property type="status" value="NOT_ANNOTATED_CDS"/>
    <property type="molecule type" value="Genomic_DNA"/>
</dbReference>
<dbReference type="EMBL" id="CX001226">
    <property type="status" value="NOT_ANNOTATED_CDS"/>
    <property type="molecule type" value="mRNA"/>
</dbReference>
<dbReference type="SMR" id="P0C8R9"/>
<dbReference type="FunCoup" id="P0C8R9">
    <property type="interactions" value="3"/>
</dbReference>
<dbReference type="STRING" id="9615.ENSCAFP00000041381"/>
<dbReference type="PaxDb" id="9612-ENSCAFP00000031760"/>
<dbReference type="Ensembl" id="ENSCAFT00000045010.3">
    <molecule id="P0C8R9-2"/>
    <property type="protein sequence ID" value="ENSCAFP00000039520.1"/>
    <property type="gene ID" value="ENSCAFG00000023602.5"/>
</dbReference>
<dbReference type="Ensembl" id="ENSCAFT00030006718.1">
    <molecule id="P0C8R9-2"/>
    <property type="protein sequence ID" value="ENSCAFP00030005900.1"/>
    <property type="gene ID" value="ENSCAFG00030003567.1"/>
</dbReference>
<dbReference type="Ensembl" id="ENSCAFT00040005766.1">
    <molecule id="P0C8R9-2"/>
    <property type="protein sequence ID" value="ENSCAFP00040004966.1"/>
    <property type="gene ID" value="ENSCAFG00040003008.1"/>
</dbReference>
<dbReference type="Ensembl" id="ENSCAFT00845001581.1">
    <molecule id="P0C8R9-2"/>
    <property type="protein sequence ID" value="ENSCAFP00845001251.1"/>
    <property type="gene ID" value="ENSCAFG00845000875.1"/>
</dbReference>
<dbReference type="eggNOG" id="ENOG502S5MK">
    <property type="taxonomic scope" value="Eukaryota"/>
</dbReference>
<dbReference type="GeneTree" id="ENSGT00390000008582"/>
<dbReference type="HOGENOM" id="CLU_101826_1_0_1"/>
<dbReference type="InParanoid" id="P0C8R9"/>
<dbReference type="TreeFam" id="TF351823"/>
<dbReference type="Proteomes" id="UP000002254">
    <property type="component" value="Chromosome 2"/>
</dbReference>
<dbReference type="Proteomes" id="UP000694429">
    <property type="component" value="Chromosome 2"/>
</dbReference>
<dbReference type="Proteomes" id="UP000694542">
    <property type="component" value="Chromosome 2"/>
</dbReference>
<dbReference type="Proteomes" id="UP000805418">
    <property type="component" value="Chromosome 2"/>
</dbReference>
<dbReference type="Bgee" id="ENSCAFG00000023602">
    <property type="expression patterns" value="Expressed in bone marrow and 50 other cell types or tissues"/>
</dbReference>
<dbReference type="GO" id="GO:0005829">
    <property type="term" value="C:cytosol"/>
    <property type="evidence" value="ECO:0000318"/>
    <property type="project" value="GO_Central"/>
</dbReference>
<dbReference type="GO" id="GO:0005886">
    <property type="term" value="C:plasma membrane"/>
    <property type="evidence" value="ECO:0000318"/>
    <property type="project" value="GO_Central"/>
</dbReference>
<dbReference type="GO" id="GO:0001525">
    <property type="term" value="P:angiogenesis"/>
    <property type="evidence" value="ECO:0007669"/>
    <property type="project" value="UniProtKB-KW"/>
</dbReference>
<dbReference type="GO" id="GO:0006915">
    <property type="term" value="P:apoptotic process"/>
    <property type="evidence" value="ECO:0007669"/>
    <property type="project" value="UniProtKB-KW"/>
</dbReference>
<dbReference type="GO" id="GO:0030154">
    <property type="term" value="P:cell differentiation"/>
    <property type="evidence" value="ECO:0007669"/>
    <property type="project" value="UniProtKB-KW"/>
</dbReference>
<dbReference type="GO" id="GO:0006935">
    <property type="term" value="P:chemotaxis"/>
    <property type="evidence" value="ECO:0007669"/>
    <property type="project" value="UniProtKB-KW"/>
</dbReference>
<dbReference type="GO" id="GO:0016525">
    <property type="term" value="P:negative regulation of angiogenesis"/>
    <property type="evidence" value="ECO:0000318"/>
    <property type="project" value="GO_Central"/>
</dbReference>
<dbReference type="GO" id="GO:2000353">
    <property type="term" value="P:positive regulation of endothelial cell apoptotic process"/>
    <property type="evidence" value="ECO:0000318"/>
    <property type="project" value="GO_Central"/>
</dbReference>
<dbReference type="GO" id="GO:1901800">
    <property type="term" value="P:positive regulation of proteasomal protein catabolic process"/>
    <property type="evidence" value="ECO:0000318"/>
    <property type="project" value="GO_Central"/>
</dbReference>
<dbReference type="InterPro" id="IPR026247">
    <property type="entry name" value="ECSCR"/>
</dbReference>
<dbReference type="PANTHER" id="PTHR28602">
    <property type="entry name" value="ENDOTHELIAL CELL-SPECIFIC CHEMOTAXIS REGULATOR"/>
    <property type="match status" value="1"/>
</dbReference>
<dbReference type="PANTHER" id="PTHR28602:SF1">
    <property type="entry name" value="ENDOTHELIAL CELL-SPECIFIC CHEMOTAXIS REGULATOR"/>
    <property type="match status" value="1"/>
</dbReference>
<dbReference type="Pfam" id="PF15820">
    <property type="entry name" value="ECSCR"/>
    <property type="match status" value="1"/>
</dbReference>
<dbReference type="PRINTS" id="PR02069">
    <property type="entry name" value="ECCREGULATOR"/>
</dbReference>
<protein>
    <recommendedName>
        <fullName>Endothelial cell-specific chemotaxis regulator</fullName>
    </recommendedName>
    <alternativeName>
        <fullName>Endothelial cell-specific molecule 2</fullName>
    </alternativeName>
</protein>
<evidence type="ECO:0000250" key="1"/>
<evidence type="ECO:0000250" key="2">
    <source>
        <dbReference type="UniProtKB" id="Q3TZW0"/>
    </source>
</evidence>
<evidence type="ECO:0000255" key="3"/>
<evidence type="ECO:0000256" key="4">
    <source>
        <dbReference type="SAM" id="MobiDB-lite"/>
    </source>
</evidence>
<evidence type="ECO:0000303" key="5">
    <source ref="1"/>
</evidence>
<evidence type="ECO:0000305" key="6"/>
<proteinExistence type="evidence at transcript level"/>
<sequence>MGTVRAARLCGAILGFLLLQGAFGKPSLITEPLSSNTGNSSSSEPRSSSSPASAGTPDTSQNITPISTTMSLRIREDSTILPSPTSETVLTVAAFGVISFIVILVVVVIILVSVVSLRFKCRKNKESEDPQKPGSSGLSESCSTANGEKDSITLISMKNINMNNSKGCPTAEKVI</sequence>